<comment type="induction">
    <text evidence="2">Constitutively expressed in all growth phases, part of the MSMEG_1276-phd-doc-MSMEG_1279 operon.</text>
</comment>
<name>Y1276_MYCS2</name>
<gene>
    <name type="ordered locus">MSMEG_1276</name>
    <name type="ordered locus">MSMEI_1238.1</name>
</gene>
<feature type="chain" id="PRO_0000420850" description="Uncharacterized protein MSMEG_1276/MSMEI_1238.1">
    <location>
        <begin position="1"/>
        <end position="98"/>
    </location>
</feature>
<feature type="region of interest" description="Disordered" evidence="1">
    <location>
        <begin position="53"/>
        <end position="98"/>
    </location>
</feature>
<protein>
    <recommendedName>
        <fullName>Uncharacterized protein MSMEG_1276/MSMEI_1238.1</fullName>
    </recommendedName>
</protein>
<sequence length="98" mass="10515">MAQLVRDRIPELIRASGRTPVIRTLSDDEYWAALDAKLDEEVAELRAADTRDAALEGGRHRHRGESASGNGIQHGVPPNVALIPSGSTLLTPARSGHV</sequence>
<reference key="1">
    <citation type="submission" date="2006-10" db="EMBL/GenBank/DDBJ databases">
        <authorList>
            <person name="Fleischmann R.D."/>
            <person name="Dodson R.J."/>
            <person name="Haft D.H."/>
            <person name="Merkel J.S."/>
            <person name="Nelson W.C."/>
            <person name="Fraser C.M."/>
        </authorList>
    </citation>
    <scope>NUCLEOTIDE SEQUENCE [LARGE SCALE GENOMIC DNA]</scope>
    <source>
        <strain>ATCC 700084 / mc(2)155</strain>
    </source>
</reference>
<reference key="2">
    <citation type="journal article" date="2007" name="Genome Biol.">
        <title>Interrupted coding sequences in Mycobacterium smegmatis: authentic mutations or sequencing errors?</title>
        <authorList>
            <person name="Deshayes C."/>
            <person name="Perrodou E."/>
            <person name="Gallien S."/>
            <person name="Euphrasie D."/>
            <person name="Schaeffer C."/>
            <person name="Van-Dorsselaer A."/>
            <person name="Poch O."/>
            <person name="Lecompte O."/>
            <person name="Reyrat J.-M."/>
        </authorList>
    </citation>
    <scope>NUCLEOTIDE SEQUENCE [LARGE SCALE GENOMIC DNA]</scope>
    <source>
        <strain>ATCC 700084 / mc(2)155</strain>
    </source>
</reference>
<reference key="3">
    <citation type="journal article" date="2009" name="Genome Res.">
        <title>Ortho-proteogenomics: multiple proteomes investigation through orthology and a new MS-based protocol.</title>
        <authorList>
            <person name="Gallien S."/>
            <person name="Perrodou E."/>
            <person name="Carapito C."/>
            <person name="Deshayes C."/>
            <person name="Reyrat J.-M."/>
            <person name="Van Dorsselaer A."/>
            <person name="Poch O."/>
            <person name="Schaeffer C."/>
            <person name="Lecompte O."/>
        </authorList>
    </citation>
    <scope>NUCLEOTIDE SEQUENCE [LARGE SCALE GENOMIC DNA]</scope>
    <source>
        <strain>ATCC 700084 / mc(2)155</strain>
    </source>
</reference>
<reference key="4">
    <citation type="journal article" date="2012" name="J. Biol. Chem.">
        <title>Toxin-antitoxin systems of Mycobacterium smegmatis are essential for cell survival.</title>
        <authorList>
            <person name="Frampton R."/>
            <person name="Aggio R.B."/>
            <person name="Villas-Boas S.G."/>
            <person name="Arcus V.L."/>
            <person name="Cook G.M."/>
        </authorList>
    </citation>
    <scope>INDUCTION</scope>
    <source>
        <strain>ATCC 700084 / mc(2)155</strain>
    </source>
</reference>
<dbReference type="EMBL" id="CP000480">
    <property type="protein sequence ID" value="ABK72930.1"/>
    <property type="molecule type" value="Genomic_DNA"/>
</dbReference>
<dbReference type="EMBL" id="CP001663">
    <property type="status" value="NOT_ANNOTATED_CDS"/>
    <property type="molecule type" value="Genomic_DNA"/>
</dbReference>
<dbReference type="RefSeq" id="WP_011727558.1">
    <property type="nucleotide sequence ID" value="NZ_SIJM01000042.1"/>
</dbReference>
<dbReference type="RefSeq" id="YP_885666.1">
    <property type="nucleotide sequence ID" value="NC_008596.1"/>
</dbReference>
<dbReference type="STRING" id="246196.MSMEG_1276"/>
<dbReference type="KEGG" id="msb:LJ00_06355"/>
<dbReference type="KEGG" id="msm:MSMEG_1276"/>
<dbReference type="PATRIC" id="fig|246196.57.peg.1286"/>
<dbReference type="OrthoDB" id="9813491at2"/>
<dbReference type="Proteomes" id="UP000000757">
    <property type="component" value="Chromosome"/>
</dbReference>
<dbReference type="Proteomes" id="UP000006158">
    <property type="component" value="Chromosome"/>
</dbReference>
<dbReference type="CDD" id="cd11532">
    <property type="entry name" value="NTP-PPase_COG4997"/>
    <property type="match status" value="1"/>
</dbReference>
<dbReference type="InterPro" id="IPR038735">
    <property type="entry name" value="MSMEG_1276-like_NTP-PPase_dom"/>
</dbReference>
<evidence type="ECO:0000256" key="1">
    <source>
        <dbReference type="SAM" id="MobiDB-lite"/>
    </source>
</evidence>
<evidence type="ECO:0000269" key="2">
    <source>
    </source>
</evidence>
<keyword id="KW-1185">Reference proteome</keyword>
<accession>A0QRX8</accession>
<organism>
    <name type="scientific">Mycolicibacterium smegmatis (strain ATCC 700084 / mc(2)155)</name>
    <name type="common">Mycobacterium smegmatis</name>
    <dbReference type="NCBI Taxonomy" id="246196"/>
    <lineage>
        <taxon>Bacteria</taxon>
        <taxon>Bacillati</taxon>
        <taxon>Actinomycetota</taxon>
        <taxon>Actinomycetes</taxon>
        <taxon>Mycobacteriales</taxon>
        <taxon>Mycobacteriaceae</taxon>
        <taxon>Mycolicibacterium</taxon>
    </lineage>
</organism>
<proteinExistence type="evidence at transcript level"/>